<gene>
    <name evidence="1" type="primary">rpmE</name>
    <name type="ordered locus">Xaut_0843</name>
</gene>
<sequence length="74" mass="8332">MKSDIHPDYHFIKVVMTDGSEYTTRSTYGKEGDTLQLDIDPRTHPAWTGGTQQLMDRGGRVSRFKSKFGALLKG</sequence>
<comment type="function">
    <text evidence="1">Binds the 23S rRNA.</text>
</comment>
<comment type="subunit">
    <text evidence="1">Part of the 50S ribosomal subunit.</text>
</comment>
<comment type="similarity">
    <text evidence="1">Belongs to the bacterial ribosomal protein bL31 family. Type A subfamily.</text>
</comment>
<reference key="1">
    <citation type="submission" date="2007-07" db="EMBL/GenBank/DDBJ databases">
        <title>Complete sequence of chromosome of Xanthobacter autotrophicus Py2.</title>
        <authorList>
            <consortium name="US DOE Joint Genome Institute"/>
            <person name="Copeland A."/>
            <person name="Lucas S."/>
            <person name="Lapidus A."/>
            <person name="Barry K."/>
            <person name="Glavina del Rio T."/>
            <person name="Hammon N."/>
            <person name="Israni S."/>
            <person name="Dalin E."/>
            <person name="Tice H."/>
            <person name="Pitluck S."/>
            <person name="Sims D."/>
            <person name="Brettin T."/>
            <person name="Bruce D."/>
            <person name="Detter J.C."/>
            <person name="Han C."/>
            <person name="Tapia R."/>
            <person name="Brainard J."/>
            <person name="Schmutz J."/>
            <person name="Larimer F."/>
            <person name="Land M."/>
            <person name="Hauser L."/>
            <person name="Kyrpides N."/>
            <person name="Kim E."/>
            <person name="Ensigns S.A."/>
            <person name="Richardson P."/>
        </authorList>
    </citation>
    <scope>NUCLEOTIDE SEQUENCE [LARGE SCALE GENOMIC DNA]</scope>
    <source>
        <strain>ATCC BAA-1158 / Py2</strain>
    </source>
</reference>
<keyword id="KW-1185">Reference proteome</keyword>
<keyword id="KW-0687">Ribonucleoprotein</keyword>
<keyword id="KW-0689">Ribosomal protein</keyword>
<keyword id="KW-0694">RNA-binding</keyword>
<keyword id="KW-0699">rRNA-binding</keyword>
<feature type="chain" id="PRO_1000126767" description="Large ribosomal subunit protein bL31">
    <location>
        <begin position="1"/>
        <end position="74"/>
    </location>
</feature>
<name>RL31_XANP2</name>
<proteinExistence type="inferred from homology"/>
<evidence type="ECO:0000255" key="1">
    <source>
        <dbReference type="HAMAP-Rule" id="MF_00501"/>
    </source>
</evidence>
<evidence type="ECO:0000305" key="2"/>
<protein>
    <recommendedName>
        <fullName evidence="1">Large ribosomal subunit protein bL31</fullName>
    </recommendedName>
    <alternativeName>
        <fullName evidence="2">50S ribosomal protein L31</fullName>
    </alternativeName>
</protein>
<accession>A7IDK1</accession>
<dbReference type="EMBL" id="CP000781">
    <property type="protein sequence ID" value="ABS66094.1"/>
    <property type="molecule type" value="Genomic_DNA"/>
</dbReference>
<dbReference type="SMR" id="A7IDK1"/>
<dbReference type="STRING" id="78245.Xaut_0843"/>
<dbReference type="KEGG" id="xau:Xaut_0843"/>
<dbReference type="eggNOG" id="COG0254">
    <property type="taxonomic scope" value="Bacteria"/>
</dbReference>
<dbReference type="HOGENOM" id="CLU_114306_3_2_5"/>
<dbReference type="OrthoDB" id="9803251at2"/>
<dbReference type="PhylomeDB" id="A7IDK1"/>
<dbReference type="Proteomes" id="UP000002417">
    <property type="component" value="Chromosome"/>
</dbReference>
<dbReference type="GO" id="GO:1990904">
    <property type="term" value="C:ribonucleoprotein complex"/>
    <property type="evidence" value="ECO:0007669"/>
    <property type="project" value="UniProtKB-KW"/>
</dbReference>
<dbReference type="GO" id="GO:0005840">
    <property type="term" value="C:ribosome"/>
    <property type="evidence" value="ECO:0007669"/>
    <property type="project" value="UniProtKB-KW"/>
</dbReference>
<dbReference type="GO" id="GO:0019843">
    <property type="term" value="F:rRNA binding"/>
    <property type="evidence" value="ECO:0007669"/>
    <property type="project" value="UniProtKB-KW"/>
</dbReference>
<dbReference type="GO" id="GO:0003735">
    <property type="term" value="F:structural constituent of ribosome"/>
    <property type="evidence" value="ECO:0007669"/>
    <property type="project" value="InterPro"/>
</dbReference>
<dbReference type="GO" id="GO:0006412">
    <property type="term" value="P:translation"/>
    <property type="evidence" value="ECO:0007669"/>
    <property type="project" value="UniProtKB-UniRule"/>
</dbReference>
<dbReference type="Gene3D" id="4.10.830.30">
    <property type="entry name" value="Ribosomal protein L31"/>
    <property type="match status" value="1"/>
</dbReference>
<dbReference type="HAMAP" id="MF_00501">
    <property type="entry name" value="Ribosomal_bL31_1"/>
    <property type="match status" value="1"/>
</dbReference>
<dbReference type="InterPro" id="IPR034704">
    <property type="entry name" value="Ribosomal_bL28/bL31-like_sf"/>
</dbReference>
<dbReference type="InterPro" id="IPR002150">
    <property type="entry name" value="Ribosomal_bL31"/>
</dbReference>
<dbReference type="InterPro" id="IPR027491">
    <property type="entry name" value="Ribosomal_bL31_A"/>
</dbReference>
<dbReference type="InterPro" id="IPR042105">
    <property type="entry name" value="Ribosomal_bL31_sf"/>
</dbReference>
<dbReference type="NCBIfam" id="TIGR00105">
    <property type="entry name" value="L31"/>
    <property type="match status" value="1"/>
</dbReference>
<dbReference type="NCBIfam" id="NF001809">
    <property type="entry name" value="PRK00528.1"/>
    <property type="match status" value="1"/>
</dbReference>
<dbReference type="PANTHER" id="PTHR33280">
    <property type="entry name" value="50S RIBOSOMAL PROTEIN L31, CHLOROPLASTIC"/>
    <property type="match status" value="1"/>
</dbReference>
<dbReference type="PANTHER" id="PTHR33280:SF6">
    <property type="entry name" value="LARGE RIBOSOMAL SUBUNIT PROTEIN BL31A"/>
    <property type="match status" value="1"/>
</dbReference>
<dbReference type="Pfam" id="PF01197">
    <property type="entry name" value="Ribosomal_L31"/>
    <property type="match status" value="1"/>
</dbReference>
<dbReference type="PRINTS" id="PR01249">
    <property type="entry name" value="RIBOSOMALL31"/>
</dbReference>
<dbReference type="SUPFAM" id="SSF143800">
    <property type="entry name" value="L28p-like"/>
    <property type="match status" value="1"/>
</dbReference>
<dbReference type="PROSITE" id="PS01143">
    <property type="entry name" value="RIBOSOMAL_L31"/>
    <property type="match status" value="1"/>
</dbReference>
<organism>
    <name type="scientific">Xanthobacter autotrophicus (strain ATCC BAA-1158 / Py2)</name>
    <dbReference type="NCBI Taxonomy" id="78245"/>
    <lineage>
        <taxon>Bacteria</taxon>
        <taxon>Pseudomonadati</taxon>
        <taxon>Pseudomonadota</taxon>
        <taxon>Alphaproteobacteria</taxon>
        <taxon>Hyphomicrobiales</taxon>
        <taxon>Xanthobacteraceae</taxon>
        <taxon>Xanthobacter</taxon>
    </lineage>
</organism>